<protein>
    <recommendedName>
        <fullName evidence="1">D-aminoacyl-tRNA deacylase</fullName>
        <shortName evidence="1">DTD</shortName>
        <ecNumber evidence="1">3.1.1.96</ecNumber>
    </recommendedName>
    <alternativeName>
        <fullName evidence="1">Gly-tRNA(Ala) deacylase</fullName>
    </alternativeName>
</protein>
<evidence type="ECO:0000255" key="1">
    <source>
        <dbReference type="HAMAP-Rule" id="MF_00518"/>
    </source>
</evidence>
<organism>
    <name type="scientific">Magnetococcus marinus (strain ATCC BAA-1437 / JCM 17883 / MC-1)</name>
    <dbReference type="NCBI Taxonomy" id="156889"/>
    <lineage>
        <taxon>Bacteria</taxon>
        <taxon>Pseudomonadati</taxon>
        <taxon>Pseudomonadota</taxon>
        <taxon>Alphaproteobacteria</taxon>
        <taxon>Magnetococcales</taxon>
        <taxon>Magnetococcaceae</taxon>
        <taxon>Magnetococcus</taxon>
    </lineage>
</organism>
<proteinExistence type="inferred from homology"/>
<comment type="function">
    <text evidence="1">An aminoacyl-tRNA editing enzyme that deacylates mischarged D-aminoacyl-tRNAs. Also deacylates mischarged glycyl-tRNA(Ala), protecting cells against glycine mischarging by AlaRS. Acts via tRNA-based rather than protein-based catalysis; rejects L-amino acids rather than detecting D-amino acids in the active site. By recycling D-aminoacyl-tRNA to D-amino acids and free tRNA molecules, this enzyme counteracts the toxicity associated with the formation of D-aminoacyl-tRNA entities in vivo and helps enforce protein L-homochirality.</text>
</comment>
<comment type="catalytic activity">
    <reaction evidence="1">
        <text>glycyl-tRNA(Ala) + H2O = tRNA(Ala) + glycine + H(+)</text>
        <dbReference type="Rhea" id="RHEA:53744"/>
        <dbReference type="Rhea" id="RHEA-COMP:9657"/>
        <dbReference type="Rhea" id="RHEA-COMP:13640"/>
        <dbReference type="ChEBI" id="CHEBI:15377"/>
        <dbReference type="ChEBI" id="CHEBI:15378"/>
        <dbReference type="ChEBI" id="CHEBI:57305"/>
        <dbReference type="ChEBI" id="CHEBI:78442"/>
        <dbReference type="ChEBI" id="CHEBI:78522"/>
        <dbReference type="EC" id="3.1.1.96"/>
    </reaction>
</comment>
<comment type="catalytic activity">
    <reaction evidence="1">
        <text>a D-aminoacyl-tRNA + H2O = a tRNA + a D-alpha-amino acid + H(+)</text>
        <dbReference type="Rhea" id="RHEA:13953"/>
        <dbReference type="Rhea" id="RHEA-COMP:10123"/>
        <dbReference type="Rhea" id="RHEA-COMP:10124"/>
        <dbReference type="ChEBI" id="CHEBI:15377"/>
        <dbReference type="ChEBI" id="CHEBI:15378"/>
        <dbReference type="ChEBI" id="CHEBI:59871"/>
        <dbReference type="ChEBI" id="CHEBI:78442"/>
        <dbReference type="ChEBI" id="CHEBI:79333"/>
        <dbReference type="EC" id="3.1.1.96"/>
    </reaction>
</comment>
<comment type="subunit">
    <text evidence="1">Homodimer.</text>
</comment>
<comment type="subcellular location">
    <subcellularLocation>
        <location evidence="1">Cytoplasm</location>
    </subcellularLocation>
</comment>
<comment type="domain">
    <text evidence="1">A Gly-cisPro motif from one monomer fits into the active site of the other monomer to allow specific chiral rejection of L-amino acids.</text>
</comment>
<comment type="similarity">
    <text evidence="1">Belongs to the DTD family.</text>
</comment>
<accession>A0L7S8</accession>
<feature type="chain" id="PRO_1000050851" description="D-aminoacyl-tRNA deacylase">
    <location>
        <begin position="1"/>
        <end position="151"/>
    </location>
</feature>
<feature type="short sequence motif" description="Gly-cisPro motif, important for rejection of L-amino acids" evidence="1">
    <location>
        <begin position="138"/>
        <end position="139"/>
    </location>
</feature>
<dbReference type="EC" id="3.1.1.96" evidence="1"/>
<dbReference type="EMBL" id="CP000471">
    <property type="protein sequence ID" value="ABK44021.1"/>
    <property type="molecule type" value="Genomic_DNA"/>
</dbReference>
<dbReference type="RefSeq" id="WP_011713172.1">
    <property type="nucleotide sequence ID" value="NC_008576.1"/>
</dbReference>
<dbReference type="SMR" id="A0L7S8"/>
<dbReference type="STRING" id="156889.Mmc1_1512"/>
<dbReference type="KEGG" id="mgm:Mmc1_1512"/>
<dbReference type="eggNOG" id="COG1490">
    <property type="taxonomic scope" value="Bacteria"/>
</dbReference>
<dbReference type="HOGENOM" id="CLU_076901_1_1_5"/>
<dbReference type="OrthoDB" id="9801395at2"/>
<dbReference type="Proteomes" id="UP000002586">
    <property type="component" value="Chromosome"/>
</dbReference>
<dbReference type="GO" id="GO:0005737">
    <property type="term" value="C:cytoplasm"/>
    <property type="evidence" value="ECO:0007669"/>
    <property type="project" value="UniProtKB-SubCell"/>
</dbReference>
<dbReference type="GO" id="GO:0051500">
    <property type="term" value="F:D-tyrosyl-tRNA(Tyr) deacylase activity"/>
    <property type="evidence" value="ECO:0007669"/>
    <property type="project" value="TreeGrafter"/>
</dbReference>
<dbReference type="GO" id="GO:0106026">
    <property type="term" value="F:Gly-tRNA(Ala) deacylase activity"/>
    <property type="evidence" value="ECO:0007669"/>
    <property type="project" value="UniProtKB-UniRule"/>
</dbReference>
<dbReference type="GO" id="GO:0043908">
    <property type="term" value="F:Ser(Gly)-tRNA(Ala) hydrolase activity"/>
    <property type="evidence" value="ECO:0007669"/>
    <property type="project" value="UniProtKB-UniRule"/>
</dbReference>
<dbReference type="GO" id="GO:0000049">
    <property type="term" value="F:tRNA binding"/>
    <property type="evidence" value="ECO:0007669"/>
    <property type="project" value="UniProtKB-UniRule"/>
</dbReference>
<dbReference type="GO" id="GO:0019478">
    <property type="term" value="P:D-amino acid catabolic process"/>
    <property type="evidence" value="ECO:0007669"/>
    <property type="project" value="UniProtKB-UniRule"/>
</dbReference>
<dbReference type="FunFam" id="3.50.80.10:FF:000001">
    <property type="entry name" value="D-aminoacyl-tRNA deacylase"/>
    <property type="match status" value="1"/>
</dbReference>
<dbReference type="Gene3D" id="3.50.80.10">
    <property type="entry name" value="D-tyrosyl-tRNA(Tyr) deacylase"/>
    <property type="match status" value="1"/>
</dbReference>
<dbReference type="HAMAP" id="MF_00518">
    <property type="entry name" value="Deacylase_Dtd"/>
    <property type="match status" value="1"/>
</dbReference>
<dbReference type="InterPro" id="IPR003732">
    <property type="entry name" value="Daa-tRNA_deacyls_DTD"/>
</dbReference>
<dbReference type="InterPro" id="IPR023509">
    <property type="entry name" value="DTD-like_sf"/>
</dbReference>
<dbReference type="NCBIfam" id="TIGR00256">
    <property type="entry name" value="D-aminoacyl-tRNA deacylase"/>
    <property type="match status" value="1"/>
</dbReference>
<dbReference type="PANTHER" id="PTHR10472:SF5">
    <property type="entry name" value="D-AMINOACYL-TRNA DEACYLASE 1"/>
    <property type="match status" value="1"/>
</dbReference>
<dbReference type="PANTHER" id="PTHR10472">
    <property type="entry name" value="D-TYROSYL-TRNA TYR DEACYLASE"/>
    <property type="match status" value="1"/>
</dbReference>
<dbReference type="Pfam" id="PF02580">
    <property type="entry name" value="Tyr_Deacylase"/>
    <property type="match status" value="1"/>
</dbReference>
<dbReference type="SUPFAM" id="SSF69500">
    <property type="entry name" value="DTD-like"/>
    <property type="match status" value="1"/>
</dbReference>
<gene>
    <name evidence="1" type="primary">dtd</name>
    <name type="ordered locus">Mmc1_1512</name>
</gene>
<sequence length="151" mass="16691">MRALVQRVSEASVVVEGQVVGAVERGLLVLLAVERGDGEKQLEEMVRKVARLRIFPDEAGKMNLSVKDIEGEVLVVSQFTLAADMRKGYRPSFSLAEEPKRAEALYLDYCQRLNQHEGVVVAQGLFGADMQVKLINDGPVTIWLDLPPQEG</sequence>
<keyword id="KW-0963">Cytoplasm</keyword>
<keyword id="KW-0378">Hydrolase</keyword>
<keyword id="KW-1185">Reference proteome</keyword>
<keyword id="KW-0694">RNA-binding</keyword>
<keyword id="KW-0820">tRNA-binding</keyword>
<name>DTD_MAGMM</name>
<reference key="1">
    <citation type="journal article" date="2009" name="Appl. Environ. Microbiol.">
        <title>Complete genome sequence of the chemolithoautotrophic marine magnetotactic coccus strain MC-1.</title>
        <authorList>
            <person name="Schubbe S."/>
            <person name="Williams T.J."/>
            <person name="Xie G."/>
            <person name="Kiss H.E."/>
            <person name="Brettin T.S."/>
            <person name="Martinez D."/>
            <person name="Ross C.A."/>
            <person name="Schuler D."/>
            <person name="Cox B.L."/>
            <person name="Nealson K.H."/>
            <person name="Bazylinski D.A."/>
        </authorList>
    </citation>
    <scope>NUCLEOTIDE SEQUENCE [LARGE SCALE GENOMIC DNA]</scope>
    <source>
        <strain>ATCC BAA-1437 / JCM 17883 / MC-1</strain>
    </source>
</reference>